<reference key="1">
    <citation type="journal article" date="2008" name="Genome Res.">
        <title>Comparative genome analysis of Salmonella enteritidis PT4 and Salmonella gallinarum 287/91 provides insights into evolutionary and host adaptation pathways.</title>
        <authorList>
            <person name="Thomson N.R."/>
            <person name="Clayton D.J."/>
            <person name="Windhorst D."/>
            <person name="Vernikos G."/>
            <person name="Davidson S."/>
            <person name="Churcher C."/>
            <person name="Quail M.A."/>
            <person name="Stevens M."/>
            <person name="Jones M.A."/>
            <person name="Watson M."/>
            <person name="Barron A."/>
            <person name="Layton A."/>
            <person name="Pickard D."/>
            <person name="Kingsley R.A."/>
            <person name="Bignell A."/>
            <person name="Clark L."/>
            <person name="Harris B."/>
            <person name="Ormond D."/>
            <person name="Abdellah Z."/>
            <person name="Brooks K."/>
            <person name="Cherevach I."/>
            <person name="Chillingworth T."/>
            <person name="Woodward J."/>
            <person name="Norberczak H."/>
            <person name="Lord A."/>
            <person name="Arrowsmith C."/>
            <person name="Jagels K."/>
            <person name="Moule S."/>
            <person name="Mungall K."/>
            <person name="Saunders M."/>
            <person name="Whitehead S."/>
            <person name="Chabalgoity J.A."/>
            <person name="Maskell D."/>
            <person name="Humphreys T."/>
            <person name="Roberts M."/>
            <person name="Barrow P.A."/>
            <person name="Dougan G."/>
            <person name="Parkhill J."/>
        </authorList>
    </citation>
    <scope>NUCLEOTIDE SEQUENCE [LARGE SCALE GENOMIC DNA]</scope>
    <source>
        <strain>287/91 / NCTC 13346</strain>
    </source>
</reference>
<organism>
    <name type="scientific">Salmonella gallinarum (strain 287/91 / NCTC 13346)</name>
    <dbReference type="NCBI Taxonomy" id="550538"/>
    <lineage>
        <taxon>Bacteria</taxon>
        <taxon>Pseudomonadati</taxon>
        <taxon>Pseudomonadota</taxon>
        <taxon>Gammaproteobacteria</taxon>
        <taxon>Enterobacterales</taxon>
        <taxon>Enterobacteriaceae</taxon>
        <taxon>Salmonella</taxon>
    </lineage>
</organism>
<evidence type="ECO:0000255" key="1">
    <source>
        <dbReference type="HAMAP-Rule" id="MF_00386"/>
    </source>
</evidence>
<proteinExistence type="inferred from homology"/>
<comment type="function">
    <text evidence="1">Could be involved in insertion of integral membrane proteins into the membrane.</text>
</comment>
<comment type="subcellular location">
    <subcellularLocation>
        <location evidence="1">Cell inner membrane</location>
        <topology evidence="1">Peripheral membrane protein</topology>
        <orientation evidence="1">Cytoplasmic side</orientation>
    </subcellularLocation>
</comment>
<comment type="similarity">
    <text evidence="1">Belongs to the UPF0161 family.</text>
</comment>
<dbReference type="EMBL" id="AM933173">
    <property type="protein sequence ID" value="CAR39378.1"/>
    <property type="molecule type" value="Genomic_DNA"/>
</dbReference>
<dbReference type="RefSeq" id="WP_001307474.1">
    <property type="nucleotide sequence ID" value="NC_011274.1"/>
</dbReference>
<dbReference type="GeneID" id="97443257"/>
<dbReference type="KEGG" id="seg:SG3590"/>
<dbReference type="HOGENOM" id="CLU_144811_5_2_6"/>
<dbReference type="Proteomes" id="UP000008321">
    <property type="component" value="Chromosome"/>
</dbReference>
<dbReference type="GO" id="GO:0005886">
    <property type="term" value="C:plasma membrane"/>
    <property type="evidence" value="ECO:0007669"/>
    <property type="project" value="UniProtKB-SubCell"/>
</dbReference>
<dbReference type="HAMAP" id="MF_00386">
    <property type="entry name" value="UPF0161_YidD"/>
    <property type="match status" value="1"/>
</dbReference>
<dbReference type="InterPro" id="IPR002696">
    <property type="entry name" value="Membr_insert_effic_factor_YidD"/>
</dbReference>
<dbReference type="NCBIfam" id="TIGR00278">
    <property type="entry name" value="membrane protein insertion efficiency factor YidD"/>
    <property type="match status" value="1"/>
</dbReference>
<dbReference type="PANTHER" id="PTHR33383">
    <property type="entry name" value="MEMBRANE PROTEIN INSERTION EFFICIENCY FACTOR-RELATED"/>
    <property type="match status" value="1"/>
</dbReference>
<dbReference type="PANTHER" id="PTHR33383:SF1">
    <property type="entry name" value="MEMBRANE PROTEIN INSERTION EFFICIENCY FACTOR-RELATED"/>
    <property type="match status" value="1"/>
</dbReference>
<dbReference type="Pfam" id="PF01809">
    <property type="entry name" value="YidD"/>
    <property type="match status" value="1"/>
</dbReference>
<dbReference type="SMART" id="SM01234">
    <property type="entry name" value="Haemolytic"/>
    <property type="match status" value="1"/>
</dbReference>
<sequence length="85" mass="9381">MAPPLSPGSRVLIALIRVYQRLISPLLGPHCRFTPTCSSYGIEALRRFGVIKGSWLTVKRVLKCHPLHPGGDDPVPPGPFDTREH</sequence>
<gene>
    <name evidence="1" type="primary">yidD</name>
    <name type="ordered locus">SG3590</name>
</gene>
<keyword id="KW-0997">Cell inner membrane</keyword>
<keyword id="KW-1003">Cell membrane</keyword>
<keyword id="KW-0472">Membrane</keyword>
<accession>B5RFY4</accession>
<protein>
    <recommendedName>
        <fullName evidence="1">Putative membrane protein insertion efficiency factor</fullName>
    </recommendedName>
</protein>
<name>YIDD_SALG2</name>
<feature type="chain" id="PRO_1000197777" description="Putative membrane protein insertion efficiency factor">
    <location>
        <begin position="1"/>
        <end position="85"/>
    </location>
</feature>